<dbReference type="EC" id="2.7.2.1" evidence="1"/>
<dbReference type="EMBL" id="AE007317">
    <property type="protein sequence ID" value="AAL00657.1"/>
    <property type="molecule type" value="Genomic_DNA"/>
</dbReference>
<dbReference type="PIR" id="D98103">
    <property type="entry name" value="D98103"/>
</dbReference>
<dbReference type="RefSeq" id="NP_359446.1">
    <property type="nucleotide sequence ID" value="NC_003098.1"/>
</dbReference>
<dbReference type="RefSeq" id="WP_000167757.1">
    <property type="nucleotide sequence ID" value="NC_003098.1"/>
</dbReference>
<dbReference type="SMR" id="P63414"/>
<dbReference type="STRING" id="171101.spr1854"/>
<dbReference type="KEGG" id="spr:spr1854"/>
<dbReference type="PATRIC" id="fig|171101.6.peg.2001"/>
<dbReference type="eggNOG" id="COG0282">
    <property type="taxonomic scope" value="Bacteria"/>
</dbReference>
<dbReference type="HOGENOM" id="CLU_020352_0_1_9"/>
<dbReference type="UniPathway" id="UPA00340">
    <property type="reaction ID" value="UER00458"/>
</dbReference>
<dbReference type="Proteomes" id="UP000000586">
    <property type="component" value="Chromosome"/>
</dbReference>
<dbReference type="GO" id="GO:0005737">
    <property type="term" value="C:cytoplasm"/>
    <property type="evidence" value="ECO:0007669"/>
    <property type="project" value="UniProtKB-SubCell"/>
</dbReference>
<dbReference type="GO" id="GO:0008776">
    <property type="term" value="F:acetate kinase activity"/>
    <property type="evidence" value="ECO:0000318"/>
    <property type="project" value="GO_Central"/>
</dbReference>
<dbReference type="GO" id="GO:0005524">
    <property type="term" value="F:ATP binding"/>
    <property type="evidence" value="ECO:0007669"/>
    <property type="project" value="UniProtKB-KW"/>
</dbReference>
<dbReference type="GO" id="GO:0000287">
    <property type="term" value="F:magnesium ion binding"/>
    <property type="evidence" value="ECO:0007669"/>
    <property type="project" value="UniProtKB-UniRule"/>
</dbReference>
<dbReference type="GO" id="GO:0006083">
    <property type="term" value="P:acetate metabolic process"/>
    <property type="evidence" value="ECO:0000318"/>
    <property type="project" value="GO_Central"/>
</dbReference>
<dbReference type="GO" id="GO:0006085">
    <property type="term" value="P:acetyl-CoA biosynthetic process"/>
    <property type="evidence" value="ECO:0007669"/>
    <property type="project" value="UniProtKB-UniRule"/>
</dbReference>
<dbReference type="CDD" id="cd24010">
    <property type="entry name" value="ASKHA_NBD_AcK_PK"/>
    <property type="match status" value="1"/>
</dbReference>
<dbReference type="Gene3D" id="3.30.420.40">
    <property type="match status" value="2"/>
</dbReference>
<dbReference type="HAMAP" id="MF_00020">
    <property type="entry name" value="Acetate_kinase"/>
    <property type="match status" value="1"/>
</dbReference>
<dbReference type="InterPro" id="IPR004372">
    <property type="entry name" value="Ac/propionate_kinase"/>
</dbReference>
<dbReference type="InterPro" id="IPR000890">
    <property type="entry name" value="Aliphatic_acid_kin_short-chain"/>
</dbReference>
<dbReference type="InterPro" id="IPR023865">
    <property type="entry name" value="Aliphatic_acid_kinase_CS"/>
</dbReference>
<dbReference type="InterPro" id="IPR043129">
    <property type="entry name" value="ATPase_NBD"/>
</dbReference>
<dbReference type="NCBIfam" id="TIGR00016">
    <property type="entry name" value="ackA"/>
    <property type="match status" value="1"/>
</dbReference>
<dbReference type="PANTHER" id="PTHR21060">
    <property type="entry name" value="ACETATE KINASE"/>
    <property type="match status" value="1"/>
</dbReference>
<dbReference type="PANTHER" id="PTHR21060:SF15">
    <property type="entry name" value="ACETATE KINASE-RELATED"/>
    <property type="match status" value="1"/>
</dbReference>
<dbReference type="Pfam" id="PF00871">
    <property type="entry name" value="Acetate_kinase"/>
    <property type="match status" value="1"/>
</dbReference>
<dbReference type="PIRSF" id="PIRSF000722">
    <property type="entry name" value="Acetate_prop_kin"/>
    <property type="match status" value="1"/>
</dbReference>
<dbReference type="PRINTS" id="PR00471">
    <property type="entry name" value="ACETATEKNASE"/>
</dbReference>
<dbReference type="SUPFAM" id="SSF53067">
    <property type="entry name" value="Actin-like ATPase domain"/>
    <property type="match status" value="2"/>
</dbReference>
<dbReference type="PROSITE" id="PS01075">
    <property type="entry name" value="ACETATE_KINASE_1"/>
    <property type="match status" value="1"/>
</dbReference>
<dbReference type="PROSITE" id="PS01076">
    <property type="entry name" value="ACETATE_KINASE_2"/>
    <property type="match status" value="1"/>
</dbReference>
<gene>
    <name evidence="1" type="primary">ackA</name>
    <name type="ordered locus">spr1854</name>
</gene>
<feature type="chain" id="PRO_0000107624" description="Acetate kinase">
    <location>
        <begin position="1"/>
        <end position="396"/>
    </location>
</feature>
<feature type="active site" description="Proton donor/acceptor" evidence="1">
    <location>
        <position position="146"/>
    </location>
</feature>
<feature type="binding site" evidence="1">
    <location>
        <position position="8"/>
    </location>
    <ligand>
        <name>Mg(2+)</name>
        <dbReference type="ChEBI" id="CHEBI:18420"/>
    </ligand>
</feature>
<feature type="binding site" evidence="1">
    <location>
        <position position="15"/>
    </location>
    <ligand>
        <name>ATP</name>
        <dbReference type="ChEBI" id="CHEBI:30616"/>
    </ligand>
</feature>
<feature type="binding site" evidence="1">
    <location>
        <position position="89"/>
    </location>
    <ligand>
        <name>substrate</name>
    </ligand>
</feature>
<feature type="binding site" evidence="1">
    <location>
        <begin position="206"/>
        <end position="210"/>
    </location>
    <ligand>
        <name>ATP</name>
        <dbReference type="ChEBI" id="CHEBI:30616"/>
    </ligand>
</feature>
<feature type="binding site" evidence="1">
    <location>
        <begin position="283"/>
        <end position="285"/>
    </location>
    <ligand>
        <name>ATP</name>
        <dbReference type="ChEBI" id="CHEBI:30616"/>
    </ligand>
</feature>
<feature type="binding site" evidence="1">
    <location>
        <begin position="331"/>
        <end position="335"/>
    </location>
    <ligand>
        <name>ATP</name>
        <dbReference type="ChEBI" id="CHEBI:30616"/>
    </ligand>
</feature>
<feature type="binding site" evidence="1">
    <location>
        <position position="383"/>
    </location>
    <ligand>
        <name>Mg(2+)</name>
        <dbReference type="ChEBI" id="CHEBI:18420"/>
    </ligand>
</feature>
<feature type="site" description="Transition state stabilizer" evidence="1">
    <location>
        <position position="178"/>
    </location>
</feature>
<feature type="site" description="Transition state stabilizer" evidence="1">
    <location>
        <position position="239"/>
    </location>
</feature>
<accession>P63414</accession>
<accession>Q97NI3</accession>
<name>ACKA_STRR6</name>
<reference key="1">
    <citation type="journal article" date="2001" name="J. Bacteriol.">
        <title>Genome of the bacterium Streptococcus pneumoniae strain R6.</title>
        <authorList>
            <person name="Hoskins J."/>
            <person name="Alborn W.E. Jr."/>
            <person name="Arnold J."/>
            <person name="Blaszczak L.C."/>
            <person name="Burgett S."/>
            <person name="DeHoff B.S."/>
            <person name="Estrem S.T."/>
            <person name="Fritz L."/>
            <person name="Fu D.-J."/>
            <person name="Fuller W."/>
            <person name="Geringer C."/>
            <person name="Gilmour R."/>
            <person name="Glass J.S."/>
            <person name="Khoja H."/>
            <person name="Kraft A.R."/>
            <person name="Lagace R.E."/>
            <person name="LeBlanc D.J."/>
            <person name="Lee L.N."/>
            <person name="Lefkowitz E.J."/>
            <person name="Lu J."/>
            <person name="Matsushima P."/>
            <person name="McAhren S.M."/>
            <person name="McHenney M."/>
            <person name="McLeaster K."/>
            <person name="Mundy C.W."/>
            <person name="Nicas T.I."/>
            <person name="Norris F.H."/>
            <person name="O'Gara M."/>
            <person name="Peery R.B."/>
            <person name="Robertson G.T."/>
            <person name="Rockey P."/>
            <person name="Sun P.-M."/>
            <person name="Winkler M.E."/>
            <person name="Yang Y."/>
            <person name="Young-Bellido M."/>
            <person name="Zhao G."/>
            <person name="Zook C.A."/>
            <person name="Baltz R.H."/>
            <person name="Jaskunas S.R."/>
            <person name="Rosteck P.R. Jr."/>
            <person name="Skatrud P.L."/>
            <person name="Glass J.I."/>
        </authorList>
    </citation>
    <scope>NUCLEOTIDE SEQUENCE [LARGE SCALE GENOMIC DNA]</scope>
    <source>
        <strain>ATCC BAA-255 / R6</strain>
    </source>
</reference>
<proteinExistence type="inferred from homology"/>
<organism>
    <name type="scientific">Streptococcus pneumoniae (strain ATCC BAA-255 / R6)</name>
    <dbReference type="NCBI Taxonomy" id="171101"/>
    <lineage>
        <taxon>Bacteria</taxon>
        <taxon>Bacillati</taxon>
        <taxon>Bacillota</taxon>
        <taxon>Bacilli</taxon>
        <taxon>Lactobacillales</taxon>
        <taxon>Streptococcaceae</taxon>
        <taxon>Streptococcus</taxon>
    </lineage>
</organism>
<sequence length="396" mass="43342">MTKTIAINAGSSSLKWQLYLMPEEKVLAKGLIERIGLKDSISTVKFDGRSEQQILDIENHIQAVKILLDDLIRFDIIKAYDEITGVGHRVVAGGEYFKESTVVEGDVLEKVEELSLLAPLHNPANAAGVRAFKELLPDITSVVVFDTSFHTSMPEKAYRYPLPTKYYTENKVRKYGAHGTSHQFVAGEAAKLLGRPLEDLKLITCHIGNGGSITAVKAGKSVDTSMGFTPLGGIMMGTRTGDIDPAIIPYLMQYTEDFNTPEDISRVLNRESGLLGVSANSSDMRDIEAAVAEGNHEASLAYEMYVDRIQKHIGQYLAVLNGADAIVFTAGVGENAESFRRDVISGISWFGCDVDDEKNVFGVTGDISTEAAKIRVLVIPTDEELVIARDVERLKK</sequence>
<evidence type="ECO:0000255" key="1">
    <source>
        <dbReference type="HAMAP-Rule" id="MF_00020"/>
    </source>
</evidence>
<keyword id="KW-0067">ATP-binding</keyword>
<keyword id="KW-0963">Cytoplasm</keyword>
<keyword id="KW-0418">Kinase</keyword>
<keyword id="KW-0460">Magnesium</keyword>
<keyword id="KW-0479">Metal-binding</keyword>
<keyword id="KW-0547">Nucleotide-binding</keyword>
<keyword id="KW-1185">Reference proteome</keyword>
<keyword id="KW-0808">Transferase</keyword>
<protein>
    <recommendedName>
        <fullName evidence="1">Acetate kinase</fullName>
        <ecNumber evidence="1">2.7.2.1</ecNumber>
    </recommendedName>
    <alternativeName>
        <fullName evidence="1">Acetokinase</fullName>
    </alternativeName>
</protein>
<comment type="function">
    <text evidence="1">Catalyzes the formation of acetyl phosphate from acetate and ATP. Can also catalyze the reverse reaction.</text>
</comment>
<comment type="catalytic activity">
    <reaction evidence="1">
        <text>acetate + ATP = acetyl phosphate + ADP</text>
        <dbReference type="Rhea" id="RHEA:11352"/>
        <dbReference type="ChEBI" id="CHEBI:22191"/>
        <dbReference type="ChEBI" id="CHEBI:30089"/>
        <dbReference type="ChEBI" id="CHEBI:30616"/>
        <dbReference type="ChEBI" id="CHEBI:456216"/>
        <dbReference type="EC" id="2.7.2.1"/>
    </reaction>
</comment>
<comment type="cofactor">
    <cofactor evidence="1">
        <name>Mg(2+)</name>
        <dbReference type="ChEBI" id="CHEBI:18420"/>
    </cofactor>
    <cofactor evidence="1">
        <name>Mn(2+)</name>
        <dbReference type="ChEBI" id="CHEBI:29035"/>
    </cofactor>
    <text evidence="1">Mg(2+). Can also accept Mn(2+).</text>
</comment>
<comment type="pathway">
    <text evidence="1">Metabolic intermediate biosynthesis; acetyl-CoA biosynthesis; acetyl-CoA from acetate: step 1/2.</text>
</comment>
<comment type="subunit">
    <text evidence="1">Homodimer.</text>
</comment>
<comment type="subcellular location">
    <subcellularLocation>
        <location evidence="1">Cytoplasm</location>
    </subcellularLocation>
</comment>
<comment type="similarity">
    <text evidence="1">Belongs to the acetokinase family.</text>
</comment>